<feature type="chain" id="PRO_1000166374" description="Large ribosomal subunit protein uL16">
    <location>
        <begin position="1"/>
        <end position="138"/>
    </location>
</feature>
<feature type="region of interest" description="Disordered" evidence="2">
    <location>
        <begin position="1"/>
        <end position="25"/>
    </location>
</feature>
<feature type="compositionally biased region" description="Basic residues" evidence="2">
    <location>
        <begin position="1"/>
        <end position="16"/>
    </location>
</feature>
<reference key="1">
    <citation type="submission" date="2009-03" db="EMBL/GenBank/DDBJ databases">
        <title>Comparison of the complete genome sequences of Rhodococcus erythropolis PR4 and Rhodococcus opacus B4.</title>
        <authorList>
            <person name="Takarada H."/>
            <person name="Sekine M."/>
            <person name="Hosoyama A."/>
            <person name="Yamada R."/>
            <person name="Fujisawa T."/>
            <person name="Omata S."/>
            <person name="Shimizu A."/>
            <person name="Tsukatani N."/>
            <person name="Tanikawa S."/>
            <person name="Fujita N."/>
            <person name="Harayama S."/>
        </authorList>
    </citation>
    <scope>NUCLEOTIDE SEQUENCE [LARGE SCALE GENOMIC DNA]</scope>
    <source>
        <strain>B4</strain>
    </source>
</reference>
<proteinExistence type="inferred from homology"/>
<gene>
    <name evidence="1" type="primary">rplP</name>
    <name type="ordered locus">ROP_61930</name>
</gene>
<evidence type="ECO:0000255" key="1">
    <source>
        <dbReference type="HAMAP-Rule" id="MF_01342"/>
    </source>
</evidence>
<evidence type="ECO:0000256" key="2">
    <source>
        <dbReference type="SAM" id="MobiDB-lite"/>
    </source>
</evidence>
<evidence type="ECO:0000305" key="3"/>
<accession>C1B019</accession>
<protein>
    <recommendedName>
        <fullName evidence="1">Large ribosomal subunit protein uL16</fullName>
    </recommendedName>
    <alternativeName>
        <fullName evidence="3">50S ribosomal protein L16</fullName>
    </alternativeName>
</protein>
<organism>
    <name type="scientific">Rhodococcus opacus (strain B4)</name>
    <dbReference type="NCBI Taxonomy" id="632772"/>
    <lineage>
        <taxon>Bacteria</taxon>
        <taxon>Bacillati</taxon>
        <taxon>Actinomycetota</taxon>
        <taxon>Actinomycetes</taxon>
        <taxon>Mycobacteriales</taxon>
        <taxon>Nocardiaceae</taxon>
        <taxon>Rhodococcus</taxon>
    </lineage>
</organism>
<dbReference type="EMBL" id="AP011115">
    <property type="protein sequence ID" value="BAH54440.1"/>
    <property type="molecule type" value="Genomic_DNA"/>
</dbReference>
<dbReference type="RefSeq" id="WP_005239636.1">
    <property type="nucleotide sequence ID" value="NC_012522.1"/>
</dbReference>
<dbReference type="SMR" id="C1B019"/>
<dbReference type="STRING" id="632772.ROP_61930"/>
<dbReference type="GeneID" id="69890523"/>
<dbReference type="KEGG" id="rop:ROP_61930"/>
<dbReference type="PATRIC" id="fig|632772.20.peg.6469"/>
<dbReference type="HOGENOM" id="CLU_078858_2_1_11"/>
<dbReference type="OrthoDB" id="9802589at2"/>
<dbReference type="Proteomes" id="UP000002212">
    <property type="component" value="Chromosome"/>
</dbReference>
<dbReference type="GO" id="GO:0022625">
    <property type="term" value="C:cytosolic large ribosomal subunit"/>
    <property type="evidence" value="ECO:0007669"/>
    <property type="project" value="TreeGrafter"/>
</dbReference>
<dbReference type="GO" id="GO:0019843">
    <property type="term" value="F:rRNA binding"/>
    <property type="evidence" value="ECO:0007669"/>
    <property type="project" value="UniProtKB-UniRule"/>
</dbReference>
<dbReference type="GO" id="GO:0003735">
    <property type="term" value="F:structural constituent of ribosome"/>
    <property type="evidence" value="ECO:0007669"/>
    <property type="project" value="InterPro"/>
</dbReference>
<dbReference type="GO" id="GO:0000049">
    <property type="term" value="F:tRNA binding"/>
    <property type="evidence" value="ECO:0007669"/>
    <property type="project" value="UniProtKB-KW"/>
</dbReference>
<dbReference type="GO" id="GO:0006412">
    <property type="term" value="P:translation"/>
    <property type="evidence" value="ECO:0007669"/>
    <property type="project" value="UniProtKB-UniRule"/>
</dbReference>
<dbReference type="CDD" id="cd01433">
    <property type="entry name" value="Ribosomal_L16_L10e"/>
    <property type="match status" value="1"/>
</dbReference>
<dbReference type="FunFam" id="3.90.1170.10:FF:000001">
    <property type="entry name" value="50S ribosomal protein L16"/>
    <property type="match status" value="1"/>
</dbReference>
<dbReference type="Gene3D" id="3.90.1170.10">
    <property type="entry name" value="Ribosomal protein L10e/L16"/>
    <property type="match status" value="1"/>
</dbReference>
<dbReference type="HAMAP" id="MF_01342">
    <property type="entry name" value="Ribosomal_uL16"/>
    <property type="match status" value="1"/>
</dbReference>
<dbReference type="InterPro" id="IPR047873">
    <property type="entry name" value="Ribosomal_uL16"/>
</dbReference>
<dbReference type="InterPro" id="IPR000114">
    <property type="entry name" value="Ribosomal_uL16_bact-type"/>
</dbReference>
<dbReference type="InterPro" id="IPR020798">
    <property type="entry name" value="Ribosomal_uL16_CS"/>
</dbReference>
<dbReference type="InterPro" id="IPR016180">
    <property type="entry name" value="Ribosomal_uL16_dom"/>
</dbReference>
<dbReference type="InterPro" id="IPR036920">
    <property type="entry name" value="Ribosomal_uL16_sf"/>
</dbReference>
<dbReference type="NCBIfam" id="TIGR01164">
    <property type="entry name" value="rplP_bact"/>
    <property type="match status" value="1"/>
</dbReference>
<dbReference type="PANTHER" id="PTHR12220">
    <property type="entry name" value="50S/60S RIBOSOMAL PROTEIN L16"/>
    <property type="match status" value="1"/>
</dbReference>
<dbReference type="PANTHER" id="PTHR12220:SF13">
    <property type="entry name" value="LARGE RIBOSOMAL SUBUNIT PROTEIN UL16M"/>
    <property type="match status" value="1"/>
</dbReference>
<dbReference type="Pfam" id="PF00252">
    <property type="entry name" value="Ribosomal_L16"/>
    <property type="match status" value="1"/>
</dbReference>
<dbReference type="PRINTS" id="PR00060">
    <property type="entry name" value="RIBOSOMALL16"/>
</dbReference>
<dbReference type="SUPFAM" id="SSF54686">
    <property type="entry name" value="Ribosomal protein L16p/L10e"/>
    <property type="match status" value="1"/>
</dbReference>
<dbReference type="PROSITE" id="PS00586">
    <property type="entry name" value="RIBOSOMAL_L16_1"/>
    <property type="match status" value="1"/>
</dbReference>
<dbReference type="PROSITE" id="PS00701">
    <property type="entry name" value="RIBOSOMAL_L16_2"/>
    <property type="match status" value="1"/>
</dbReference>
<sequence length="138" mass="15892">MLIPRRVKHRKQHHPSRSGAAKGGTQVTFGDYGIQALEPAYITNRQIESARIAMTRHIKRGGKIWINIFPDRPLTKKPAETRMGSGKGSPEWWIANVKPGRVMFEMSYPNEEIAREALRRAMHKLPCKCRIVTREEQF</sequence>
<comment type="function">
    <text evidence="1">Binds 23S rRNA and is also seen to make contacts with the A and possibly P site tRNAs.</text>
</comment>
<comment type="subunit">
    <text evidence="1">Part of the 50S ribosomal subunit.</text>
</comment>
<comment type="similarity">
    <text evidence="1">Belongs to the universal ribosomal protein uL16 family.</text>
</comment>
<keyword id="KW-0687">Ribonucleoprotein</keyword>
<keyword id="KW-0689">Ribosomal protein</keyword>
<keyword id="KW-0694">RNA-binding</keyword>
<keyword id="KW-0699">rRNA-binding</keyword>
<keyword id="KW-0820">tRNA-binding</keyword>
<name>RL16_RHOOB</name>